<keyword id="KW-0067">ATP-binding</keyword>
<keyword id="KW-0472">Membrane</keyword>
<keyword id="KW-0547">Nucleotide-binding</keyword>
<keyword id="KW-1185">Reference proteome</keyword>
<keyword id="KW-0812">Transmembrane</keyword>
<keyword id="KW-1133">Transmembrane helix</keyword>
<keyword id="KW-0813">Transport</keyword>
<accession>Q54R52</accession>
<accession>Q8T6I7</accession>
<comment type="subcellular location">
    <subcellularLocation>
        <location evidence="4">Membrane</location>
        <topology evidence="4">Multi-pass membrane protein</topology>
    </subcellularLocation>
</comment>
<comment type="similarity">
    <text evidence="4">Belongs to the ABC transporter superfamily. ABCA family.</text>
</comment>
<name>ABCAA_DICDI</name>
<organism>
    <name type="scientific">Dictyostelium discoideum</name>
    <name type="common">Social amoeba</name>
    <dbReference type="NCBI Taxonomy" id="44689"/>
    <lineage>
        <taxon>Eukaryota</taxon>
        <taxon>Amoebozoa</taxon>
        <taxon>Evosea</taxon>
        <taxon>Eumycetozoa</taxon>
        <taxon>Dictyostelia</taxon>
        <taxon>Dictyosteliales</taxon>
        <taxon>Dictyosteliaceae</taxon>
        <taxon>Dictyostelium</taxon>
    </lineage>
</organism>
<reference key="1">
    <citation type="journal article" date="2002" name="Eukaryot. Cell">
        <title>Evolutionary analyses of ABC transporters of Dictyostelium discoideum.</title>
        <authorList>
            <person name="Anjard C."/>
            <person name="Loomis W.F."/>
        </authorList>
    </citation>
    <scope>NUCLEOTIDE SEQUENCE [GENOMIC DNA]</scope>
    <scope>NOMENCLATURE</scope>
    <source>
        <strain>AX4</strain>
    </source>
</reference>
<reference key="2">
    <citation type="journal article" date="2005" name="Nature">
        <title>The genome of the social amoeba Dictyostelium discoideum.</title>
        <authorList>
            <person name="Eichinger L."/>
            <person name="Pachebat J.A."/>
            <person name="Gloeckner G."/>
            <person name="Rajandream M.A."/>
            <person name="Sucgang R."/>
            <person name="Berriman M."/>
            <person name="Song J."/>
            <person name="Olsen R."/>
            <person name="Szafranski K."/>
            <person name="Xu Q."/>
            <person name="Tunggal B."/>
            <person name="Kummerfeld S."/>
            <person name="Madera M."/>
            <person name="Konfortov B.A."/>
            <person name="Rivero F."/>
            <person name="Bankier A.T."/>
            <person name="Lehmann R."/>
            <person name="Hamlin N."/>
            <person name="Davies R."/>
            <person name="Gaudet P."/>
            <person name="Fey P."/>
            <person name="Pilcher K."/>
            <person name="Chen G."/>
            <person name="Saunders D."/>
            <person name="Sodergren E.J."/>
            <person name="Davis P."/>
            <person name="Kerhornou A."/>
            <person name="Nie X."/>
            <person name="Hall N."/>
            <person name="Anjard C."/>
            <person name="Hemphill L."/>
            <person name="Bason N."/>
            <person name="Farbrother P."/>
            <person name="Desany B."/>
            <person name="Just E."/>
            <person name="Morio T."/>
            <person name="Rost R."/>
            <person name="Churcher C.M."/>
            <person name="Cooper J."/>
            <person name="Haydock S."/>
            <person name="van Driessche N."/>
            <person name="Cronin A."/>
            <person name="Goodhead I."/>
            <person name="Muzny D.M."/>
            <person name="Mourier T."/>
            <person name="Pain A."/>
            <person name="Lu M."/>
            <person name="Harper D."/>
            <person name="Lindsay R."/>
            <person name="Hauser H."/>
            <person name="James K.D."/>
            <person name="Quiles M."/>
            <person name="Madan Babu M."/>
            <person name="Saito T."/>
            <person name="Buchrieser C."/>
            <person name="Wardroper A."/>
            <person name="Felder M."/>
            <person name="Thangavelu M."/>
            <person name="Johnson D."/>
            <person name="Knights A."/>
            <person name="Loulseged H."/>
            <person name="Mungall K.L."/>
            <person name="Oliver K."/>
            <person name="Price C."/>
            <person name="Quail M.A."/>
            <person name="Urushihara H."/>
            <person name="Hernandez J."/>
            <person name="Rabbinowitsch E."/>
            <person name="Steffen D."/>
            <person name="Sanders M."/>
            <person name="Ma J."/>
            <person name="Kohara Y."/>
            <person name="Sharp S."/>
            <person name="Simmonds M.N."/>
            <person name="Spiegler S."/>
            <person name="Tivey A."/>
            <person name="Sugano S."/>
            <person name="White B."/>
            <person name="Walker D."/>
            <person name="Woodward J.R."/>
            <person name="Winckler T."/>
            <person name="Tanaka Y."/>
            <person name="Shaulsky G."/>
            <person name="Schleicher M."/>
            <person name="Weinstock G.M."/>
            <person name="Rosenthal A."/>
            <person name="Cox E.C."/>
            <person name="Chisholm R.L."/>
            <person name="Gibbs R.A."/>
            <person name="Loomis W.F."/>
            <person name="Platzer M."/>
            <person name="Kay R.R."/>
            <person name="Williams J.G."/>
            <person name="Dear P.H."/>
            <person name="Noegel A.A."/>
            <person name="Barrell B.G."/>
            <person name="Kuspa A."/>
        </authorList>
    </citation>
    <scope>NUCLEOTIDE SEQUENCE [LARGE SCALE GENOMIC DNA]</scope>
    <source>
        <strain>AX4</strain>
    </source>
</reference>
<dbReference type="EMBL" id="AF465312">
    <property type="protein sequence ID" value="AAL85303.1"/>
    <property type="molecule type" value="Genomic_DNA"/>
</dbReference>
<dbReference type="EMBL" id="AAFI02000055">
    <property type="protein sequence ID" value="EAL65678.1"/>
    <property type="molecule type" value="Genomic_DNA"/>
</dbReference>
<dbReference type="RefSeq" id="XP_639039.1">
    <property type="nucleotide sequence ID" value="XM_633947.1"/>
</dbReference>
<dbReference type="SMR" id="Q54R52"/>
<dbReference type="FunCoup" id="Q54R52">
    <property type="interactions" value="143"/>
</dbReference>
<dbReference type="STRING" id="44689.Q54R52"/>
<dbReference type="PaxDb" id="44689-DDB0191529"/>
<dbReference type="EnsemblProtists" id="EAL65678">
    <property type="protein sequence ID" value="EAL65678"/>
    <property type="gene ID" value="DDB_G0283387"/>
</dbReference>
<dbReference type="GeneID" id="8624064"/>
<dbReference type="KEGG" id="ddi:DDB_G0283387"/>
<dbReference type="dictyBase" id="DDB_G0283387">
    <property type="gene designation" value="abcA10"/>
</dbReference>
<dbReference type="VEuPathDB" id="AmoebaDB:DDB_G0283387"/>
<dbReference type="eggNOG" id="KOG0059">
    <property type="taxonomic scope" value="Eukaryota"/>
</dbReference>
<dbReference type="HOGENOM" id="CLU_315910_0_0_1"/>
<dbReference type="InParanoid" id="Q54R52"/>
<dbReference type="OMA" id="AWYAIEV"/>
<dbReference type="PhylomeDB" id="Q54R52"/>
<dbReference type="PRO" id="PR:Q54R52"/>
<dbReference type="Proteomes" id="UP000002195">
    <property type="component" value="Chromosome 4"/>
</dbReference>
<dbReference type="GO" id="GO:0043231">
    <property type="term" value="C:intracellular membrane-bounded organelle"/>
    <property type="evidence" value="ECO:0000318"/>
    <property type="project" value="GO_Central"/>
</dbReference>
<dbReference type="GO" id="GO:0016020">
    <property type="term" value="C:membrane"/>
    <property type="evidence" value="ECO:0007669"/>
    <property type="project" value="UniProtKB-SubCell"/>
</dbReference>
<dbReference type="GO" id="GO:0140359">
    <property type="term" value="F:ABC-type transporter activity"/>
    <property type="evidence" value="ECO:0007669"/>
    <property type="project" value="InterPro"/>
</dbReference>
<dbReference type="GO" id="GO:0005524">
    <property type="term" value="F:ATP binding"/>
    <property type="evidence" value="ECO:0007669"/>
    <property type="project" value="UniProtKB-KW"/>
</dbReference>
<dbReference type="GO" id="GO:0016887">
    <property type="term" value="F:ATP hydrolysis activity"/>
    <property type="evidence" value="ECO:0007669"/>
    <property type="project" value="InterPro"/>
</dbReference>
<dbReference type="GO" id="GO:0042626">
    <property type="term" value="F:ATPase-coupled transmembrane transporter activity"/>
    <property type="evidence" value="ECO:0000318"/>
    <property type="project" value="GO_Central"/>
</dbReference>
<dbReference type="GO" id="GO:0005319">
    <property type="term" value="F:lipid transporter activity"/>
    <property type="evidence" value="ECO:0000318"/>
    <property type="project" value="GO_Central"/>
</dbReference>
<dbReference type="GO" id="GO:0006869">
    <property type="term" value="P:lipid transport"/>
    <property type="evidence" value="ECO:0000318"/>
    <property type="project" value="GO_Central"/>
</dbReference>
<dbReference type="GO" id="GO:0031288">
    <property type="term" value="P:sorocarp morphogenesis"/>
    <property type="evidence" value="ECO:0000315"/>
    <property type="project" value="dictyBase"/>
</dbReference>
<dbReference type="CDD" id="cd03263">
    <property type="entry name" value="ABC_subfamily_A"/>
    <property type="match status" value="1"/>
</dbReference>
<dbReference type="FunFam" id="3.40.50.300:FF:004185">
    <property type="entry name" value="ABC transporter A family member 11"/>
    <property type="match status" value="1"/>
</dbReference>
<dbReference type="Gene3D" id="3.40.50.300">
    <property type="entry name" value="P-loop containing nucleotide triphosphate hydrolases"/>
    <property type="match status" value="1"/>
</dbReference>
<dbReference type="InterPro" id="IPR003593">
    <property type="entry name" value="AAA+_ATPase"/>
</dbReference>
<dbReference type="InterPro" id="IPR013525">
    <property type="entry name" value="ABC2_TM"/>
</dbReference>
<dbReference type="InterPro" id="IPR003439">
    <property type="entry name" value="ABC_transporter-like_ATP-bd"/>
</dbReference>
<dbReference type="InterPro" id="IPR017871">
    <property type="entry name" value="ABC_transporter-like_CS"/>
</dbReference>
<dbReference type="InterPro" id="IPR026082">
    <property type="entry name" value="ABCA"/>
</dbReference>
<dbReference type="InterPro" id="IPR027417">
    <property type="entry name" value="P-loop_NTPase"/>
</dbReference>
<dbReference type="PANTHER" id="PTHR19229:SF217">
    <property type="entry name" value="ABC TRANSPORTER A FAMILY MEMBER 10-RELATED"/>
    <property type="match status" value="1"/>
</dbReference>
<dbReference type="PANTHER" id="PTHR19229">
    <property type="entry name" value="ATP-BINDING CASSETTE TRANSPORTER SUBFAMILY A ABCA"/>
    <property type="match status" value="1"/>
</dbReference>
<dbReference type="Pfam" id="PF12698">
    <property type="entry name" value="ABC2_membrane_3"/>
    <property type="match status" value="1"/>
</dbReference>
<dbReference type="Pfam" id="PF00005">
    <property type="entry name" value="ABC_tran"/>
    <property type="match status" value="1"/>
</dbReference>
<dbReference type="SMART" id="SM00382">
    <property type="entry name" value="AAA"/>
    <property type="match status" value="1"/>
</dbReference>
<dbReference type="SUPFAM" id="SSF52540">
    <property type="entry name" value="P-loop containing nucleoside triphosphate hydrolases"/>
    <property type="match status" value="1"/>
</dbReference>
<dbReference type="PROSITE" id="PS00211">
    <property type="entry name" value="ABC_TRANSPORTER_1"/>
    <property type="match status" value="1"/>
</dbReference>
<dbReference type="PROSITE" id="PS50893">
    <property type="entry name" value="ABC_TRANSPORTER_2"/>
    <property type="match status" value="1"/>
</dbReference>
<sequence>MTNNCKITFKNQLKALLGKAILLKKKKRKETITEFTQGIQYIIVLVILHYTIPNVITLNTYSPVGLGYPTSGFPLCYVSNVPFNQTSNLHLLLNSTQLPISQIVQFPNEQSLIDSYKSNPQSITYGISFNNIDYQNNILDYNILLNSTFQNTQLISIVQNLFLSTFAEIKGITTTTTTTLSSIEEFPNLTSSVSVSSYLYVIYLPLLFLFSLQQLLVTSVTERKNHIKEVMKVMGLKELVYWVTIIIVQTITNVINILLVMVVLYFTKTLTTSLNPVMLFLQFLLYSFSMVAIGIILSNLVDTPKTASAISSFLLLILVGVSCFYQFYLKSKTSSSWLRSILFLFSPCAFGEFLYKMGNDQQMMLTTNWSDPQVKISFLFLIIDIFLYFTIAWYITELYKDNTDENSITKSFTFFLSLSYWKSIFNLRSSSSSSSLPLLNNNNNCNNNNTSPSSSSSSQSSPLNKPLLSGDSDDDENDIGIRLVNLKKTYKNPITKETVNAVNDVSYTIKKGTILALLGQNGSGKTSTIGMLNGMRSPSSGDAFINGLSIKYDMDKIRENGIGLCHQSNILYDEFTCAEHIALYSRLKGLFVDGGGANGDNKRIMMDNFIMESLGEVNLVDKKDTQSIKLSGGMKRRLCLAISLIGNPSILLLDEPSSGLDSLSQHMICELLQRKKPNKTIILTTHNLDSAELLGDKICIMTSGKVKAMGSSLELKNQFNLGYILTIVYDKSLSLLQPPNINQQFESFFFNKFNDSTQSKQNLKNIQSFYNIFNNNNNENNSNNSDGSSSSSDSSSSKDVLLNIKNNNNNNNNNEERGFSSGQRDLELEYSLTHQSTDVITEFLEELESRQDEFKIKRISMSMTTLDEVFLKVSEEETINKNKQPTS</sequence>
<evidence type="ECO:0000255" key="1"/>
<evidence type="ECO:0000255" key="2">
    <source>
        <dbReference type="PROSITE-ProRule" id="PRU00434"/>
    </source>
</evidence>
<evidence type="ECO:0000256" key="3">
    <source>
        <dbReference type="SAM" id="MobiDB-lite"/>
    </source>
</evidence>
<evidence type="ECO:0000305" key="4"/>
<feature type="chain" id="PRO_0000363842" description="ABC transporter A family member 10">
    <location>
        <begin position="1"/>
        <end position="887"/>
    </location>
</feature>
<feature type="transmembrane region" description="Helical" evidence="1">
    <location>
        <begin position="38"/>
        <end position="58"/>
    </location>
</feature>
<feature type="transmembrane region" description="Helical" evidence="1">
    <location>
        <begin position="198"/>
        <end position="218"/>
    </location>
</feature>
<feature type="transmembrane region" description="Helical" evidence="1">
    <location>
        <begin position="245"/>
        <end position="265"/>
    </location>
</feature>
<feature type="transmembrane region" description="Helical" evidence="1">
    <location>
        <begin position="277"/>
        <end position="297"/>
    </location>
</feature>
<feature type="transmembrane region" description="Helical" evidence="1">
    <location>
        <begin position="309"/>
        <end position="329"/>
    </location>
</feature>
<feature type="transmembrane region" description="Helical" evidence="1">
    <location>
        <begin position="335"/>
        <end position="355"/>
    </location>
</feature>
<feature type="transmembrane region" description="Helical" evidence="1">
    <location>
        <begin position="376"/>
        <end position="396"/>
    </location>
</feature>
<feature type="domain" description="ABC transporter" evidence="2">
    <location>
        <begin position="481"/>
        <end position="728"/>
    </location>
</feature>
<feature type="region of interest" description="Disordered" evidence="3">
    <location>
        <begin position="443"/>
        <end position="474"/>
    </location>
</feature>
<feature type="region of interest" description="Disordered" evidence="3">
    <location>
        <begin position="774"/>
        <end position="799"/>
    </location>
</feature>
<feature type="compositionally biased region" description="Low complexity" evidence="3">
    <location>
        <begin position="443"/>
        <end position="469"/>
    </location>
</feature>
<feature type="compositionally biased region" description="Low complexity" evidence="3">
    <location>
        <begin position="774"/>
        <end position="797"/>
    </location>
</feature>
<feature type="binding site" evidence="2">
    <location>
        <begin position="519"/>
        <end position="526"/>
    </location>
    <ligand>
        <name>ATP</name>
        <dbReference type="ChEBI" id="CHEBI:30616"/>
    </ligand>
</feature>
<feature type="sequence conflict" description="In Ref. 1; AAL85303." evidence="4" ref="1">
    <original>RR</original>
    <variation>KK</variation>
    <location>
        <begin position="636"/>
        <end position="637"/>
    </location>
</feature>
<feature type="sequence conflict" description="In Ref. 1; AAL85303." evidence="4" ref="1">
    <original>A</original>
    <variation>P</variation>
    <location>
        <position position="641"/>
    </location>
</feature>
<feature type="sequence conflict" description="In Ref. 1; AAL85303." evidence="4" ref="1">
    <original>D</original>
    <variation>N</variation>
    <location>
        <position position="689"/>
    </location>
</feature>
<gene>
    <name type="primary">abcA10</name>
    <name type="ORF">DDB_G0283387</name>
</gene>
<proteinExistence type="inferred from homology"/>
<protein>
    <recommendedName>
        <fullName>ABC transporter A family member 10</fullName>
    </recommendedName>
    <alternativeName>
        <fullName>ABC transporter ABCA.10</fullName>
    </alternativeName>
</protein>